<accession>O30875</accession>
<accession>C5C6T2</accession>
<feature type="chain" id="PRO_0000100311" description="Major cold shock protein">
    <location>
        <begin position="1"/>
        <end position="67"/>
    </location>
</feature>
<feature type="domain" description="CSD">
    <location>
        <begin position="4"/>
        <end position="64"/>
    </location>
</feature>
<proteinExistence type="inferred from homology"/>
<organism>
    <name type="scientific">Micrococcus luteus (strain ATCC 4698 / DSM 20030 / JCM 1464 / CCM 169 / CCUG 5858 / IAM 1056 / NBRC 3333 / NCIMB 9278 / NCTC 2665 / VKM Ac-2230)</name>
    <name type="common">Micrococcus lysodeikticus</name>
    <dbReference type="NCBI Taxonomy" id="465515"/>
    <lineage>
        <taxon>Bacteria</taxon>
        <taxon>Bacillati</taxon>
        <taxon>Actinomycetota</taxon>
        <taxon>Actinomycetes</taxon>
        <taxon>Micrococcales</taxon>
        <taxon>Micrococcaceae</taxon>
        <taxon>Micrococcus</taxon>
    </lineage>
</organism>
<dbReference type="EMBL" id="AF019905">
    <property type="protein sequence ID" value="AAB70836.1"/>
    <property type="molecule type" value="Genomic_DNA"/>
</dbReference>
<dbReference type="EMBL" id="CP001628">
    <property type="protein sequence ID" value="ACS31420.1"/>
    <property type="molecule type" value="Genomic_DNA"/>
</dbReference>
<dbReference type="RefSeq" id="WP_010080175.1">
    <property type="nucleotide sequence ID" value="NZ_WBMF01000045.1"/>
</dbReference>
<dbReference type="SMR" id="O30875"/>
<dbReference type="STRING" id="465515.Mlut_19390"/>
<dbReference type="EnsemblBacteria" id="ACS31420">
    <property type="protein sequence ID" value="ACS31420"/>
    <property type="gene ID" value="Mlut_19390"/>
</dbReference>
<dbReference type="KEGG" id="mlu:Mlut_19390"/>
<dbReference type="eggNOG" id="COG1278">
    <property type="taxonomic scope" value="Bacteria"/>
</dbReference>
<dbReference type="HOGENOM" id="CLU_117621_2_1_11"/>
<dbReference type="Proteomes" id="UP000000738">
    <property type="component" value="Chromosome"/>
</dbReference>
<dbReference type="GO" id="GO:0005737">
    <property type="term" value="C:cytoplasm"/>
    <property type="evidence" value="ECO:0007669"/>
    <property type="project" value="UniProtKB-SubCell"/>
</dbReference>
<dbReference type="GO" id="GO:0003677">
    <property type="term" value="F:DNA binding"/>
    <property type="evidence" value="ECO:0007669"/>
    <property type="project" value="UniProtKB-KW"/>
</dbReference>
<dbReference type="CDD" id="cd04458">
    <property type="entry name" value="CSP_CDS"/>
    <property type="match status" value="1"/>
</dbReference>
<dbReference type="FunFam" id="2.40.50.140:FF:000006">
    <property type="entry name" value="Cold shock protein CspC"/>
    <property type="match status" value="1"/>
</dbReference>
<dbReference type="Gene3D" id="2.40.50.140">
    <property type="entry name" value="Nucleic acid-binding proteins"/>
    <property type="match status" value="1"/>
</dbReference>
<dbReference type="InterPro" id="IPR012156">
    <property type="entry name" value="Cold_shock_CspA"/>
</dbReference>
<dbReference type="InterPro" id="IPR050181">
    <property type="entry name" value="Cold_shock_domain"/>
</dbReference>
<dbReference type="InterPro" id="IPR011129">
    <property type="entry name" value="CSD"/>
</dbReference>
<dbReference type="InterPro" id="IPR019844">
    <property type="entry name" value="CSD_CS"/>
</dbReference>
<dbReference type="InterPro" id="IPR002059">
    <property type="entry name" value="CSP_DNA-bd"/>
</dbReference>
<dbReference type="InterPro" id="IPR012340">
    <property type="entry name" value="NA-bd_OB-fold"/>
</dbReference>
<dbReference type="PANTHER" id="PTHR11544">
    <property type="entry name" value="COLD SHOCK DOMAIN CONTAINING PROTEINS"/>
    <property type="match status" value="1"/>
</dbReference>
<dbReference type="Pfam" id="PF00313">
    <property type="entry name" value="CSD"/>
    <property type="match status" value="1"/>
</dbReference>
<dbReference type="PIRSF" id="PIRSF002599">
    <property type="entry name" value="Cold_shock_A"/>
    <property type="match status" value="1"/>
</dbReference>
<dbReference type="PRINTS" id="PR00050">
    <property type="entry name" value="COLDSHOCK"/>
</dbReference>
<dbReference type="SMART" id="SM00357">
    <property type="entry name" value="CSP"/>
    <property type="match status" value="1"/>
</dbReference>
<dbReference type="SUPFAM" id="SSF50249">
    <property type="entry name" value="Nucleic acid-binding proteins"/>
    <property type="match status" value="1"/>
</dbReference>
<dbReference type="PROSITE" id="PS00352">
    <property type="entry name" value="CSD_1"/>
    <property type="match status" value="1"/>
</dbReference>
<dbReference type="PROSITE" id="PS51857">
    <property type="entry name" value="CSD_2"/>
    <property type="match status" value="1"/>
</dbReference>
<gene>
    <name type="primary">cspA</name>
    <name type="ordered locus">Mlut_19390</name>
</gene>
<sequence>MAVGTVKWFNAEKGYGFIAPEDNSADVFVHFSAIQGNGFKELQENDRVEFETQDGPKGLQAANVTKL</sequence>
<protein>
    <recommendedName>
        <fullName>Major cold shock protein</fullName>
    </recommendedName>
</protein>
<reference key="1">
    <citation type="submission" date="1997-08" db="EMBL/GenBank/DDBJ databases">
        <title>Gene duplication: a mechanism for the evolution of bacterial major cold-shock protein families?</title>
        <authorList>
            <person name="Francis K.P."/>
            <person name="Stewart G.S.A.B."/>
        </authorList>
    </citation>
    <scope>NUCLEOTIDE SEQUENCE [GENOMIC DNA]</scope>
</reference>
<reference key="2">
    <citation type="journal article" date="2010" name="J. Bacteriol.">
        <title>Genome sequence of the Fleming strain of Micrococcus luteus, a simple free-living actinobacterium.</title>
        <authorList>
            <person name="Young M."/>
            <person name="Artsatbanov V."/>
            <person name="Beller H.R."/>
            <person name="Chandra G."/>
            <person name="Chater K.F."/>
            <person name="Dover L.G."/>
            <person name="Goh E.B."/>
            <person name="Kahan T."/>
            <person name="Kaprelyants A.S."/>
            <person name="Kyrpides N."/>
            <person name="Lapidus A."/>
            <person name="Lowry S.R."/>
            <person name="Lykidis A."/>
            <person name="Mahillon J."/>
            <person name="Markowitz V."/>
            <person name="Mavromatis K."/>
            <person name="Mukamolova G.V."/>
            <person name="Oren A."/>
            <person name="Rokem J.S."/>
            <person name="Smith M.C."/>
            <person name="Young D.I."/>
            <person name="Greenblatt C.L."/>
        </authorList>
    </citation>
    <scope>NUCLEOTIDE SEQUENCE [LARGE SCALE GENOMIC DNA]</scope>
    <source>
        <strain>ATCC 4698 / DSM 20030 / JCM 1464 / CCM 169 / CCUG 5858 / IAM 1056 / NBRC 3333 / NCIMB 9278 / NCTC 2665 / VKM Ac-2230</strain>
    </source>
</reference>
<evidence type="ECO:0000250" key="1"/>
<keyword id="KW-0010">Activator</keyword>
<keyword id="KW-0963">Cytoplasm</keyword>
<keyword id="KW-0238">DNA-binding</keyword>
<keyword id="KW-1185">Reference proteome</keyword>
<keyword id="KW-0804">Transcription</keyword>
<keyword id="KW-0805">Transcription regulation</keyword>
<name>CSPA_MICLC</name>
<comment type="subcellular location">
    <subcellularLocation>
        <location evidence="1">Cytoplasm</location>
    </subcellularLocation>
</comment>